<reference key="1">
    <citation type="journal article" date="2010" name="J. Bacteriol.">
        <title>Complete genome sequence of Methanothermobacter marburgensis, a methanoarchaeon model organism.</title>
        <authorList>
            <person name="Liesegang H."/>
            <person name="Kaster A.K."/>
            <person name="Wiezer A."/>
            <person name="Goenrich M."/>
            <person name="Wollherr A."/>
            <person name="Seedorf H."/>
            <person name="Gottschalk G."/>
            <person name="Thauer R.K."/>
        </authorList>
    </citation>
    <scope>NUCLEOTIDE SEQUENCE [LARGE SCALE GENOMIC DNA]</scope>
    <source>
        <strain>ATCC BAA-927 / DSM 2133 / JCM 14651 / NBRC 100331 / OCM 82 / Marburg</strain>
    </source>
</reference>
<reference key="2">
    <citation type="journal article" date="1990" name="Eur. J. Biochem.">
        <title>Two genetically distinct methyl-coenzyme M reductases in Methanobacterium thermoautotrophicum strain Marburg and delta H.</title>
        <authorList>
            <person name="Rospert S."/>
            <person name="Linder D."/>
            <person name="Ellermann J."/>
            <person name="Thauer R.K."/>
        </authorList>
    </citation>
    <scope>PROTEIN SEQUENCE OF 1-14</scope>
    <scope>FUNCTION</scope>
    <scope>CATALYTIC ACTIVITY</scope>
    <scope>BIOPHYSICOCHEMICAL PROPERTIES</scope>
    <scope>SUBUNIT</scope>
    <scope>DEVELOPMENTAL STAGE</scope>
    <source>
        <strain>ATCC BAA-927 / DSM 2133 / JCM 14651 / NBRC 100331 / OCM 82 / Marburg</strain>
    </source>
</reference>
<reference evidence="8" key="3">
    <citation type="journal article" date="2016" name="Angew. Chem. Int. Ed. Engl.">
        <title>Didehydroaspartate Modification in Methyl-CoenzymeM Reductase Catalyzing Methane Formation.</title>
        <authorList>
            <person name="Wagner T."/>
            <person name="Kahnt J."/>
            <person name="Ermler U."/>
            <person name="Shima S."/>
        </authorList>
    </citation>
    <scope>X-RAY CRYSTALLOGRAPHY (2.15 ANGSTROMS) IN COMPLEX WITH COENZYME F430; COENZYME B; COENZYME M AND MCR SUBUNITS BETA AND GAMMA</scope>
    <scope>COFACTOR</scope>
    <scope>METHYLATION AT HIS-260; ARG-274; GLN-402 AND CYS-454</scope>
    <scope>THIOCARBOXYLATION AT GLY-447</scope>
    <scope>DEHYDROGENATION AT ASP-452</scope>
    <scope>SUBUNIT</scope>
    <source>
        <strain>ATCC BAA-927 / DSM 2133 / JCM 14651 / NBRC 100331 / OCM 82 / Marburg</strain>
    </source>
</reference>
<protein>
    <recommendedName>
        <fullName evidence="5">Methyl-coenzyme M reductase II subunit alpha</fullName>
        <shortName evidence="5">MCR II alpha</shortName>
        <ecNumber evidence="3">2.8.4.1</ecNumber>
    </recommendedName>
</protein>
<feature type="chain" id="PRO_0000147458" description="Methyl-coenzyme M reductase II subunit alpha">
    <location>
        <begin position="1"/>
        <end position="553"/>
    </location>
</feature>
<feature type="binding site" description="axial binding residue" evidence="4 8">
    <location>
        <position position="150"/>
    </location>
    <ligand>
        <name>coenzyme F430</name>
        <dbReference type="ChEBI" id="CHEBI:60540"/>
    </ligand>
    <ligandPart>
        <name>Ni</name>
        <dbReference type="ChEBI" id="CHEBI:28112"/>
    </ligandPart>
</feature>
<feature type="binding site" description="in chain A" evidence="4 8">
    <location>
        <position position="228"/>
    </location>
    <ligand>
        <name>coenzyme B</name>
        <dbReference type="ChEBI" id="CHEBI:58596"/>
        <note>ligand shared between two alpha subunits</note>
    </ligand>
</feature>
<feature type="binding site" description="in chain A" evidence="4 8">
    <location>
        <begin position="259"/>
        <end position="260"/>
    </location>
    <ligand>
        <name>coenzyme B</name>
        <dbReference type="ChEBI" id="CHEBI:58596"/>
        <note>ligand shared between two alpha subunits</note>
    </ligand>
</feature>
<feature type="binding site" description="in chain B" evidence="4 8">
    <location>
        <position position="273"/>
    </location>
    <ligand>
        <name>coenzyme B</name>
        <dbReference type="ChEBI" id="CHEBI:58596"/>
        <note>ligand shared between two alpha subunits</note>
    </ligand>
</feature>
<feature type="binding site" evidence="4 8">
    <location>
        <position position="335"/>
    </location>
    <ligand>
        <name>coenzyme M</name>
        <dbReference type="ChEBI" id="CHEBI:58319"/>
    </ligand>
</feature>
<feature type="binding site" evidence="4 8">
    <location>
        <position position="446"/>
    </location>
    <ligand>
        <name>coenzyme M</name>
        <dbReference type="ChEBI" id="CHEBI:58319"/>
    </ligand>
</feature>
<feature type="modified residue" description="Pros-methylhistidine" evidence="4">
    <location>
        <position position="260"/>
    </location>
</feature>
<feature type="modified residue" description="5-methylarginine" evidence="4">
    <location>
        <position position="274"/>
    </location>
</feature>
<feature type="modified residue" description="2-methylglutamine" evidence="4">
    <location>
        <position position="402"/>
    </location>
</feature>
<feature type="modified residue" description="1-thioglycine" evidence="4">
    <location>
        <position position="447"/>
    </location>
</feature>
<feature type="modified residue" description="(Z)-2,3-didehydroaspartate" evidence="4">
    <location>
        <position position="452"/>
    </location>
</feature>
<feature type="modified residue" description="S-methylcysteine" evidence="4">
    <location>
        <position position="454"/>
    </location>
</feature>
<feature type="sequence conflict" description="In Ref. 2; AA sequence." evidence="6" ref="2">
    <original>D</original>
    <variation>L</variation>
    <location>
        <position position="2"/>
    </location>
</feature>
<feature type="helix" evidence="9">
    <location>
        <begin position="8"/>
        <end position="14"/>
    </location>
</feature>
<feature type="turn" evidence="9">
    <location>
        <begin position="15"/>
        <end position="17"/>
    </location>
</feature>
<feature type="helix" evidence="9">
    <location>
        <begin position="32"/>
        <end position="35"/>
    </location>
</feature>
<feature type="helix" evidence="9">
    <location>
        <begin position="37"/>
        <end position="48"/>
    </location>
</feature>
<feature type="turn" evidence="9">
    <location>
        <begin position="49"/>
        <end position="55"/>
    </location>
</feature>
<feature type="strand" evidence="9">
    <location>
        <begin position="63"/>
        <end position="65"/>
    </location>
</feature>
<feature type="strand" evidence="9">
    <location>
        <begin position="74"/>
        <end position="77"/>
    </location>
</feature>
<feature type="strand" evidence="9">
    <location>
        <begin position="83"/>
        <end position="85"/>
    </location>
</feature>
<feature type="helix" evidence="9">
    <location>
        <begin position="86"/>
        <end position="89"/>
    </location>
</feature>
<feature type="turn" evidence="9">
    <location>
        <begin position="91"/>
        <end position="93"/>
    </location>
</feature>
<feature type="helix" evidence="9">
    <location>
        <begin position="95"/>
        <end position="105"/>
    </location>
</feature>
<feature type="strand" evidence="9">
    <location>
        <begin position="107"/>
        <end position="112"/>
    </location>
</feature>
<feature type="helix" evidence="9">
    <location>
        <begin position="113"/>
        <end position="121"/>
    </location>
</feature>
<feature type="helix" evidence="9">
    <location>
        <begin position="129"/>
        <end position="142"/>
    </location>
</feature>
<feature type="turn" evidence="9">
    <location>
        <begin position="143"/>
        <end position="145"/>
    </location>
</feature>
<feature type="helix" evidence="9">
    <location>
        <begin position="158"/>
        <end position="160"/>
    </location>
</feature>
<feature type="strand" evidence="9">
    <location>
        <begin position="165"/>
        <end position="171"/>
    </location>
</feature>
<feature type="helix" evidence="9">
    <location>
        <begin position="173"/>
        <end position="178"/>
    </location>
</feature>
<feature type="helix" evidence="9">
    <location>
        <begin position="181"/>
        <end position="183"/>
    </location>
</feature>
<feature type="helix" evidence="9">
    <location>
        <begin position="187"/>
        <end position="190"/>
    </location>
</feature>
<feature type="helix" evidence="9">
    <location>
        <begin position="193"/>
        <end position="203"/>
    </location>
</feature>
<feature type="strand" evidence="9">
    <location>
        <begin position="207"/>
        <end position="212"/>
    </location>
</feature>
<feature type="helix" evidence="9">
    <location>
        <begin position="215"/>
        <end position="220"/>
    </location>
</feature>
<feature type="helix" evidence="9">
    <location>
        <begin position="225"/>
        <end position="241"/>
    </location>
</feature>
<feature type="helix" evidence="9">
    <location>
        <begin position="251"/>
        <end position="259"/>
    </location>
</feature>
<feature type="turn" evidence="9">
    <location>
        <begin position="260"/>
        <end position="262"/>
    </location>
</feature>
<feature type="helix" evidence="9">
    <location>
        <begin position="272"/>
        <end position="274"/>
    </location>
</feature>
<feature type="strand" evidence="9">
    <location>
        <begin position="278"/>
        <end position="280"/>
    </location>
</feature>
<feature type="helix" evidence="9">
    <location>
        <begin position="281"/>
        <end position="283"/>
    </location>
</feature>
<feature type="helix" evidence="9">
    <location>
        <begin position="286"/>
        <end position="292"/>
    </location>
</feature>
<feature type="helix" evidence="9">
    <location>
        <begin position="295"/>
        <end position="297"/>
    </location>
</feature>
<feature type="helix" evidence="9">
    <location>
        <begin position="302"/>
        <end position="317"/>
    </location>
</feature>
<feature type="helix" evidence="9">
    <location>
        <begin position="318"/>
        <end position="325"/>
    </location>
</feature>
<feature type="helix" evidence="9">
    <location>
        <begin position="333"/>
        <end position="337"/>
    </location>
</feature>
<feature type="turn" evidence="9">
    <location>
        <begin position="338"/>
        <end position="340"/>
    </location>
</feature>
<feature type="helix" evidence="9">
    <location>
        <begin position="344"/>
        <end position="359"/>
    </location>
</feature>
<feature type="helix" evidence="9">
    <location>
        <begin position="369"/>
        <end position="389"/>
    </location>
</feature>
<feature type="helix" evidence="9">
    <location>
        <begin position="391"/>
        <end position="396"/>
    </location>
</feature>
<feature type="helix" evidence="9">
    <location>
        <begin position="400"/>
        <end position="419"/>
    </location>
</feature>
<feature type="helix" evidence="9">
    <location>
        <begin position="422"/>
        <end position="440"/>
    </location>
</feature>
<feature type="helix" evidence="9">
    <location>
        <begin position="455"/>
        <end position="459"/>
    </location>
</feature>
<feature type="turn" evidence="9">
    <location>
        <begin position="464"/>
        <end position="466"/>
    </location>
</feature>
<feature type="helix" evidence="9">
    <location>
        <begin position="470"/>
        <end position="472"/>
    </location>
</feature>
<feature type="helix" evidence="9">
    <location>
        <begin position="478"/>
        <end position="480"/>
    </location>
</feature>
<feature type="strand" evidence="9">
    <location>
        <begin position="484"/>
        <end position="486"/>
    </location>
</feature>
<feature type="helix" evidence="9">
    <location>
        <begin position="487"/>
        <end position="501"/>
    </location>
</feature>
<feature type="helix" evidence="9">
    <location>
        <begin position="509"/>
        <end position="514"/>
    </location>
</feature>
<feature type="strand" evidence="9">
    <location>
        <begin position="520"/>
        <end position="522"/>
    </location>
</feature>
<feature type="helix" evidence="9">
    <location>
        <begin position="527"/>
        <end position="535"/>
    </location>
</feature>
<feature type="helix" evidence="9">
    <location>
        <begin position="546"/>
        <end position="548"/>
    </location>
</feature>
<accession>P58815</accession>
<accession>D9PXZ3</accession>
<name>MCRX_METTM</name>
<sequence length="553" mass="60678">MDEKKLFLKALKKKFEGEDPDEKYTNFYCFGGWEQSARKKEFTEYAKKAAEKRGGIPFYNPDIGVPLGQRKLMAYRVSGTDAYVEGDDLHFVNNAAIQQMVDDIKRTVIVGMDTAHAVLEKRLGVEVTPETINEYMEAINHALPGGAVVQEHMVEVHPGLVEDCYAKIFTGDDNLADELDKRILIDINKEFPEEQAEQLKSYIGNRTYQVNRVPTIVVRTCDGGTVSRWSAMQIGMSFISAYKLCAGEAAIADFSYAAKHADVIEMGTIMPARRARGPNEPGGVAFGTFADIVQTSRVSDDPANVSLEVIAGAAALYDQVWLGSYMSGGVGFTQYATAAYTDDILDDFVYYGMEYVDDKYGICGTKPTMDVVRDISTEVTLYSLEQYEEYPTLLEDHFGGSQRAAVAAAAAGCSTAFATGNSNAGINGWYLSQILHKEAHSRLGFYGYDLQDQCGASNSLSIRSDEGLIHELRGPNYPNYAMNVGHQPEYAGIAQAPHAARGDAFCTNPLIKVAFADKDLAFDFTSPRKSIAAGALREFMPEGERDLIIPAGK</sequence>
<evidence type="ECO:0000250" key="1">
    <source>
        <dbReference type="UniProtKB" id="P11558"/>
    </source>
</evidence>
<evidence type="ECO:0000250" key="2">
    <source>
        <dbReference type="UniProtKB" id="Q8THH1"/>
    </source>
</evidence>
<evidence type="ECO:0000269" key="3">
    <source>
    </source>
</evidence>
<evidence type="ECO:0000269" key="4">
    <source>
    </source>
</evidence>
<evidence type="ECO:0000303" key="5">
    <source>
    </source>
</evidence>
<evidence type="ECO:0000305" key="6"/>
<evidence type="ECO:0000305" key="7">
    <source>
    </source>
</evidence>
<evidence type="ECO:0007744" key="8">
    <source>
        <dbReference type="PDB" id="5A8R"/>
    </source>
</evidence>
<evidence type="ECO:0007829" key="9">
    <source>
        <dbReference type="PDB" id="5A8R"/>
    </source>
</evidence>
<organism>
    <name type="scientific">Methanothermobacter marburgensis (strain ATCC BAA-927 / DSM 2133 / JCM 14651 / NBRC 100331 / OCM 82 / Marburg)</name>
    <name type="common">Methanobacterium thermoautotrophicum</name>
    <dbReference type="NCBI Taxonomy" id="79929"/>
    <lineage>
        <taxon>Archaea</taxon>
        <taxon>Methanobacteriati</taxon>
        <taxon>Methanobacteriota</taxon>
        <taxon>Methanomada group</taxon>
        <taxon>Methanobacteria</taxon>
        <taxon>Methanobacteriales</taxon>
        <taxon>Methanobacteriaceae</taxon>
        <taxon>Methanothermobacter</taxon>
    </lineage>
</organism>
<keyword id="KW-0002">3D-structure</keyword>
<keyword id="KW-0903">Direct protein sequencing</keyword>
<keyword id="KW-0479">Metal-binding</keyword>
<keyword id="KW-0484">Methanogenesis</keyword>
<keyword id="KW-0488">Methylation</keyword>
<keyword id="KW-0533">Nickel</keyword>
<keyword id="KW-0808">Transferase</keyword>
<comment type="function">
    <text evidence="3">Component of the methyl-coenzyme M reductase (MCR) I that catalyzes the reductive cleavage of methyl-coenzyme M (CoM-S-CH3 or 2-(methylthio)ethanesulfonate) using coenzyme B (CoB or 7-mercaptoheptanoylthreonine phosphate) as reductant which results in the production of methane and the mixed heterodisulfide of CoB and CoM (CoM-S-S-CoB). This is the final step in methanogenesis.</text>
</comment>
<comment type="catalytic activity">
    <reaction evidence="3">
        <text>coenzyme B + methyl-coenzyme M = methane + coenzyme M-coenzyme B heterodisulfide</text>
        <dbReference type="Rhea" id="RHEA:12532"/>
        <dbReference type="ChEBI" id="CHEBI:16183"/>
        <dbReference type="ChEBI" id="CHEBI:58286"/>
        <dbReference type="ChEBI" id="CHEBI:58411"/>
        <dbReference type="ChEBI" id="CHEBI:58596"/>
        <dbReference type="EC" id="2.8.4.1"/>
    </reaction>
    <physiologicalReaction direction="left-to-right" evidence="7">
        <dbReference type="Rhea" id="RHEA:12533"/>
    </physiologicalReaction>
</comment>
<comment type="cofactor">
    <cofactor evidence="4">
        <name>coenzyme F430</name>
        <dbReference type="ChEBI" id="CHEBI:60540"/>
    </cofactor>
    <text evidence="1 4">Binds 2 coenzyme F430 non-covalently per MCR complex. Coenzyme F430 is a yellow nickel porphinoid (PubMed:27467699). Methyl-coenzyme-M reductase is activated when the enzyme-bound coenzyme F430 is reduced to the Ni(I) oxidation state (By similarity).</text>
</comment>
<comment type="biophysicochemical properties">
    <kinetics>
        <KM evidence="3">75 uM for coenzyme B</KM>
        <KM evidence="3">4 mM for methyl-coenzyme M</KM>
    </kinetics>
</comment>
<comment type="pathway">
    <text evidence="7">One-carbon metabolism; methyl-coenzyme M reduction; methane from methyl-coenzyme M: step 1/1.</text>
</comment>
<comment type="subunit">
    <text evidence="3">MCR is a hexamer of two alpha, two beta, and two gamma chains, forming a dimer of heterotrimers.</text>
</comment>
<comment type="developmental stage">
    <text evidence="3 4">There are two MCR complexes in this bacteria. MCR II is expressed in the early growth phase. Late growth cells contain mostly MCR I.</text>
</comment>
<comment type="PTM">
    <text evidence="2 4">The alpha subunit contains six modified amino acids near the active site region. Is methylated on His-260, Arg-274, Gln-402 and Cys-454, probably by the action of specific S-adenosylmethionine-dependent methyltransferases. Also contains a thioglycine at position 447, forming a thiopeptide bond. Contains a didehydroaspartate residue at position 452 (PubMed:27467699). The methylation on C5 of Arg-274 is a post-translational methylation not essential in vivo, but which plays a role for the stability and structural integrity of MCR (By similarity).</text>
</comment>
<comment type="similarity">
    <text evidence="6">Belongs to the methyl-coenzyme M reductase alpha subunit family.</text>
</comment>
<dbReference type="EC" id="2.8.4.1" evidence="3"/>
<dbReference type="EMBL" id="CP001710">
    <property type="protein sequence ID" value="ADL59091.1"/>
    <property type="molecule type" value="Genomic_DNA"/>
</dbReference>
<dbReference type="RefSeq" id="WP_013296302.1">
    <property type="nucleotide sequence ID" value="NC_014408.1"/>
</dbReference>
<dbReference type="PDB" id="5A8R">
    <property type="method" value="X-ray"/>
    <property type="resolution" value="2.15 A"/>
    <property type="chains" value="A/D/G/J=1-553"/>
</dbReference>
<dbReference type="PDBsum" id="5A8R"/>
<dbReference type="SMR" id="P58815"/>
<dbReference type="STRING" id="79929.MTBMA_c15120"/>
<dbReference type="iPTMnet" id="P58815"/>
<dbReference type="PaxDb" id="79929-MTBMA_c15120"/>
<dbReference type="GeneID" id="86199444"/>
<dbReference type="GeneID" id="9705221"/>
<dbReference type="KEGG" id="mmg:MTBMA_c15120"/>
<dbReference type="PATRIC" id="fig|79929.8.peg.1465"/>
<dbReference type="HOGENOM" id="CLU_493170_0_0_2"/>
<dbReference type="OrthoDB" id="52468at2157"/>
<dbReference type="UniPathway" id="UPA00646">
    <property type="reaction ID" value="UER00699"/>
</dbReference>
<dbReference type="Proteomes" id="UP000000345">
    <property type="component" value="Chromosome"/>
</dbReference>
<dbReference type="GO" id="GO:0050524">
    <property type="term" value="F:coenzyme-B sulfoethylthiotransferase activity"/>
    <property type="evidence" value="ECO:0007669"/>
    <property type="project" value="UniProtKB-EC"/>
</dbReference>
<dbReference type="GO" id="GO:0046872">
    <property type="term" value="F:metal ion binding"/>
    <property type="evidence" value="ECO:0007669"/>
    <property type="project" value="UniProtKB-KW"/>
</dbReference>
<dbReference type="GO" id="GO:0015948">
    <property type="term" value="P:methanogenesis"/>
    <property type="evidence" value="ECO:0007669"/>
    <property type="project" value="UniProtKB-KW"/>
</dbReference>
<dbReference type="Gene3D" id="3.30.70.470">
    <property type="match status" value="1"/>
</dbReference>
<dbReference type="Gene3D" id="1.20.840.10">
    <property type="entry name" value="Methyl-coenzyme M reductase, alpha/beta subunit, C-terminal"/>
    <property type="match status" value="1"/>
</dbReference>
<dbReference type="Gene3D" id="3.90.390.10">
    <property type="entry name" value="Methyl-coenzyme M Reductase, Chain A, domain 1"/>
    <property type="match status" value="1"/>
</dbReference>
<dbReference type="InterPro" id="IPR016212">
    <property type="entry name" value="Me_CoM_Rdtase_asu"/>
</dbReference>
<dbReference type="InterPro" id="IPR008924">
    <property type="entry name" value="Me_CoM_Rdtase_asu/bsu_C"/>
</dbReference>
<dbReference type="InterPro" id="IPR009047">
    <property type="entry name" value="Me_CoM_Rdtase_asu_C"/>
</dbReference>
<dbReference type="InterPro" id="IPR003183">
    <property type="entry name" value="Me_CoM_Rdtase_asu_N"/>
</dbReference>
<dbReference type="InterPro" id="IPR015811">
    <property type="entry name" value="Me_CoM_Rdtase_asu_N_sub1"/>
</dbReference>
<dbReference type="InterPro" id="IPR015823">
    <property type="entry name" value="Me_CoM_Rdtase_asu_N_sub2"/>
</dbReference>
<dbReference type="InterPro" id="IPR009024">
    <property type="entry name" value="Me_CoM_Rdtase_Fd-like_fold"/>
</dbReference>
<dbReference type="NCBIfam" id="TIGR03256">
    <property type="entry name" value="met_CoM_red_alp"/>
    <property type="match status" value="1"/>
</dbReference>
<dbReference type="Pfam" id="PF02249">
    <property type="entry name" value="MCR_alpha"/>
    <property type="match status" value="1"/>
</dbReference>
<dbReference type="Pfam" id="PF02745">
    <property type="entry name" value="MCR_alpha_N"/>
    <property type="match status" value="1"/>
</dbReference>
<dbReference type="PIRSF" id="PIRSF000262">
    <property type="entry name" value="MCR_alpha"/>
    <property type="match status" value="1"/>
</dbReference>
<dbReference type="SUPFAM" id="SSF48081">
    <property type="entry name" value="Methyl-coenzyme M reductase alpha and beta chain C-terminal domain"/>
    <property type="match status" value="1"/>
</dbReference>
<dbReference type="SUPFAM" id="SSF55088">
    <property type="entry name" value="Methyl-coenzyme M reductase subunits"/>
    <property type="match status" value="1"/>
</dbReference>
<gene>
    <name type="primary">mrtA</name>
    <name type="ordered locus">MTBMA_c15120</name>
</gene>
<proteinExistence type="evidence at protein level"/>